<gene>
    <name type="ORF">DDB_G0288973</name>
</gene>
<keyword id="KW-1185">Reference proteome</keyword>
<accession>Q54I66</accession>
<evidence type="ECO:0000256" key="1">
    <source>
        <dbReference type="SAM" id="MobiDB-lite"/>
    </source>
</evidence>
<organism>
    <name type="scientific">Dictyostelium discoideum</name>
    <name type="common">Social amoeba</name>
    <dbReference type="NCBI Taxonomy" id="44689"/>
    <lineage>
        <taxon>Eukaryota</taxon>
        <taxon>Amoebozoa</taxon>
        <taxon>Evosea</taxon>
        <taxon>Eumycetozoa</taxon>
        <taxon>Dictyostelia</taxon>
        <taxon>Dictyosteliales</taxon>
        <taxon>Dictyosteliaceae</taxon>
        <taxon>Dictyostelium</taxon>
    </lineage>
</organism>
<protein>
    <recommendedName>
        <fullName>Putative uncharacterized protein DDB_G0288973</fullName>
    </recommendedName>
</protein>
<sequence length="461" mass="53852">MNESIFIKEFIKILIKCKLGNEEDWFIEIIDKVWIWADKFQIKIISRVNENKELIEPINKIWNDSLKQISSEINLNKICILNLQKEISFKYLLEFENIKEFILSLFLNNLLLTEYQLLICLNSFFNNNSNLSLNVINKIREISSKNSFNNLLKDFNLKFQESIFGVNFKTNINDNKNNNELFLFPSIHINENLESRAIAQLLLNNFLKIQTNKEKEEIDPETINVISNLYNNDTTVFLWILLILSFNINNNNNNNNNNNNNNNNNNNNNNNNNNYNNLIGEMLTLIEKSKLVKKVKFFLCSDNYLLMSVTKLNFNFFQLYQDALFSLIEYYLFNENSKEINIDSDYLNYLNSSLLSLLQLTSPILINQPSQPTSPPQNEINNNNNNNNNNNNNNNNNNNNNNNNNNNNNNNNNSITSIRHLVLNSINQRIFATKTLKTNEISKGNVLKMLIDLKNSNSIKK</sequence>
<name>Y9399_DICDI</name>
<feature type="chain" id="PRO_0000346967" description="Putative uncharacterized protein DDB_G0288973">
    <location>
        <begin position="1"/>
        <end position="461"/>
    </location>
</feature>
<feature type="region of interest" description="Disordered" evidence="1">
    <location>
        <begin position="254"/>
        <end position="273"/>
    </location>
</feature>
<feature type="region of interest" description="Disordered" evidence="1">
    <location>
        <begin position="368"/>
        <end position="414"/>
    </location>
</feature>
<feature type="compositionally biased region" description="Low complexity" evidence="1">
    <location>
        <begin position="381"/>
        <end position="413"/>
    </location>
</feature>
<reference key="1">
    <citation type="journal article" date="2005" name="Nature">
        <title>The genome of the social amoeba Dictyostelium discoideum.</title>
        <authorList>
            <person name="Eichinger L."/>
            <person name="Pachebat J.A."/>
            <person name="Gloeckner G."/>
            <person name="Rajandream M.A."/>
            <person name="Sucgang R."/>
            <person name="Berriman M."/>
            <person name="Song J."/>
            <person name="Olsen R."/>
            <person name="Szafranski K."/>
            <person name="Xu Q."/>
            <person name="Tunggal B."/>
            <person name="Kummerfeld S."/>
            <person name="Madera M."/>
            <person name="Konfortov B.A."/>
            <person name="Rivero F."/>
            <person name="Bankier A.T."/>
            <person name="Lehmann R."/>
            <person name="Hamlin N."/>
            <person name="Davies R."/>
            <person name="Gaudet P."/>
            <person name="Fey P."/>
            <person name="Pilcher K."/>
            <person name="Chen G."/>
            <person name="Saunders D."/>
            <person name="Sodergren E.J."/>
            <person name="Davis P."/>
            <person name="Kerhornou A."/>
            <person name="Nie X."/>
            <person name="Hall N."/>
            <person name="Anjard C."/>
            <person name="Hemphill L."/>
            <person name="Bason N."/>
            <person name="Farbrother P."/>
            <person name="Desany B."/>
            <person name="Just E."/>
            <person name="Morio T."/>
            <person name="Rost R."/>
            <person name="Churcher C.M."/>
            <person name="Cooper J."/>
            <person name="Haydock S."/>
            <person name="van Driessche N."/>
            <person name="Cronin A."/>
            <person name="Goodhead I."/>
            <person name="Muzny D.M."/>
            <person name="Mourier T."/>
            <person name="Pain A."/>
            <person name="Lu M."/>
            <person name="Harper D."/>
            <person name="Lindsay R."/>
            <person name="Hauser H."/>
            <person name="James K.D."/>
            <person name="Quiles M."/>
            <person name="Madan Babu M."/>
            <person name="Saito T."/>
            <person name="Buchrieser C."/>
            <person name="Wardroper A."/>
            <person name="Felder M."/>
            <person name="Thangavelu M."/>
            <person name="Johnson D."/>
            <person name="Knights A."/>
            <person name="Loulseged H."/>
            <person name="Mungall K.L."/>
            <person name="Oliver K."/>
            <person name="Price C."/>
            <person name="Quail M.A."/>
            <person name="Urushihara H."/>
            <person name="Hernandez J."/>
            <person name="Rabbinowitsch E."/>
            <person name="Steffen D."/>
            <person name="Sanders M."/>
            <person name="Ma J."/>
            <person name="Kohara Y."/>
            <person name="Sharp S."/>
            <person name="Simmonds M.N."/>
            <person name="Spiegler S."/>
            <person name="Tivey A."/>
            <person name="Sugano S."/>
            <person name="White B."/>
            <person name="Walker D."/>
            <person name="Woodward J.R."/>
            <person name="Winckler T."/>
            <person name="Tanaka Y."/>
            <person name="Shaulsky G."/>
            <person name="Schleicher M."/>
            <person name="Weinstock G.M."/>
            <person name="Rosenthal A."/>
            <person name="Cox E.C."/>
            <person name="Chisholm R.L."/>
            <person name="Gibbs R.A."/>
            <person name="Loomis W.F."/>
            <person name="Platzer M."/>
            <person name="Kay R.R."/>
            <person name="Williams J.G."/>
            <person name="Dear P.H."/>
            <person name="Noegel A.A."/>
            <person name="Barrell B.G."/>
            <person name="Kuspa A."/>
        </authorList>
    </citation>
    <scope>NUCLEOTIDE SEQUENCE [LARGE SCALE GENOMIC DNA]</scope>
    <source>
        <strain>AX4</strain>
    </source>
</reference>
<proteinExistence type="predicted"/>
<dbReference type="EMBL" id="AAFI02000127">
    <property type="protein sequence ID" value="EAL62960.1"/>
    <property type="molecule type" value="Genomic_DNA"/>
</dbReference>
<dbReference type="RefSeq" id="XP_636463.1">
    <property type="nucleotide sequence ID" value="XM_631371.1"/>
</dbReference>
<dbReference type="FunCoup" id="Q54I66">
    <property type="interactions" value="744"/>
</dbReference>
<dbReference type="PaxDb" id="44689-DDB0219399"/>
<dbReference type="EnsemblProtists" id="EAL62960">
    <property type="protein sequence ID" value="EAL62960"/>
    <property type="gene ID" value="DDB_G0288973"/>
</dbReference>
<dbReference type="GeneID" id="8626896"/>
<dbReference type="KEGG" id="ddi:DDB_G0288973"/>
<dbReference type="dictyBase" id="DDB_G0288973"/>
<dbReference type="VEuPathDB" id="AmoebaDB:DDB_G0288973"/>
<dbReference type="eggNOG" id="ENOG502RI7V">
    <property type="taxonomic scope" value="Eukaryota"/>
</dbReference>
<dbReference type="HOGENOM" id="CLU_593722_0_0_1"/>
<dbReference type="InParanoid" id="Q54I66"/>
<dbReference type="OMA" id="MNESIFI"/>
<dbReference type="PRO" id="PR:Q54I66"/>
<dbReference type="Proteomes" id="UP000002195">
    <property type="component" value="Chromosome 5"/>
</dbReference>